<name>EID3_BOVIN</name>
<sequence length="379" mass="42969">MADENGSLREAGAGGKTRAQAVVTIPSSAYFLKQVEEEEEVEALKVEVAAASDTESDTSSDDLSCGKADIDPSLLERVDEEKCRSIRKQYRQLIYTVQQNRDDIVNTASDSLTEALEEANVLFDAVSRTREAALDSQFLVLASDLGKEKAKHLNSDMNFFNQVAFCDFLFIFVGLNWMEDDERDPLNNCDDNIALSFWETVQKEATSCISQAETFHFLFGSFKPESAARKPRRNHRRKVQKMEENGVMPTKLRKLDLSGNQEATEKEVERILGLLQTYFRKYPDTPVSYFEFVIDPNSFSRTVENIFYVSFIIRDGFARIRLDQDRLPILEPININLAGEGNDPSFHSRKQGVISLSLQDWKNIVAAFEISEAMITNSY</sequence>
<accession>A6QPC8</accession>
<organism>
    <name type="scientific">Bos taurus</name>
    <name type="common">Bovine</name>
    <dbReference type="NCBI Taxonomy" id="9913"/>
    <lineage>
        <taxon>Eukaryota</taxon>
        <taxon>Metazoa</taxon>
        <taxon>Chordata</taxon>
        <taxon>Craniata</taxon>
        <taxon>Vertebrata</taxon>
        <taxon>Euteleostomi</taxon>
        <taxon>Mammalia</taxon>
        <taxon>Eutheria</taxon>
        <taxon>Laurasiatheria</taxon>
        <taxon>Artiodactyla</taxon>
        <taxon>Ruminantia</taxon>
        <taxon>Pecora</taxon>
        <taxon>Bovidae</taxon>
        <taxon>Bovinae</taxon>
        <taxon>Bos</taxon>
    </lineage>
</organism>
<protein>
    <recommendedName>
        <fullName>EP300-interacting inhibitor of differentiation 3</fullName>
        <shortName>EID-3</shortName>
    </recommendedName>
    <alternativeName>
        <fullName>EID-1-like inhibitor of differentiation 3</fullName>
    </alternativeName>
    <alternativeName>
        <fullName>Non-structural maintenance of chromosomes element 4 homolog B</fullName>
        <shortName>NS4EB</shortName>
        <shortName>Non-SMC element 4 homolog B</shortName>
    </alternativeName>
</protein>
<evidence type="ECO:0000250" key="1"/>
<evidence type="ECO:0000250" key="2">
    <source>
        <dbReference type="UniProtKB" id="Q8N140"/>
    </source>
</evidence>
<evidence type="ECO:0000255" key="3"/>
<evidence type="ECO:0000312" key="4">
    <source>
        <dbReference type="EMBL" id="AAI49258.1"/>
    </source>
</evidence>
<dbReference type="EMBL" id="BC149257">
    <property type="protein sequence ID" value="AAI49258.1"/>
    <property type="molecule type" value="mRNA"/>
</dbReference>
<dbReference type="RefSeq" id="NP_001093782.1">
    <property type="nucleotide sequence ID" value="NM_001100312.1"/>
</dbReference>
<dbReference type="SMR" id="A6QPC8"/>
<dbReference type="FunCoup" id="A6QPC8">
    <property type="interactions" value="209"/>
</dbReference>
<dbReference type="GeneID" id="507232"/>
<dbReference type="KEGG" id="bta:507232"/>
<dbReference type="CTD" id="493861"/>
<dbReference type="InParanoid" id="A6QPC8"/>
<dbReference type="OrthoDB" id="5956163at2759"/>
<dbReference type="Proteomes" id="UP000009136">
    <property type="component" value="Unplaced"/>
</dbReference>
<dbReference type="GO" id="GO:0000781">
    <property type="term" value="C:chromosome, telomeric region"/>
    <property type="evidence" value="ECO:0007669"/>
    <property type="project" value="UniProtKB-SubCell"/>
</dbReference>
<dbReference type="GO" id="GO:0005737">
    <property type="term" value="C:cytoplasm"/>
    <property type="evidence" value="ECO:0007669"/>
    <property type="project" value="UniProtKB-SubCell"/>
</dbReference>
<dbReference type="GO" id="GO:0005634">
    <property type="term" value="C:nucleus"/>
    <property type="evidence" value="ECO:0000318"/>
    <property type="project" value="GO_Central"/>
</dbReference>
<dbReference type="GO" id="GO:0030915">
    <property type="term" value="C:Smc5-Smc6 complex"/>
    <property type="evidence" value="ECO:0000250"/>
    <property type="project" value="UniProtKB"/>
</dbReference>
<dbReference type="GO" id="GO:0006310">
    <property type="term" value="P:DNA recombination"/>
    <property type="evidence" value="ECO:0007669"/>
    <property type="project" value="UniProtKB-KW"/>
</dbReference>
<dbReference type="GO" id="GO:0006281">
    <property type="term" value="P:DNA repair"/>
    <property type="evidence" value="ECO:0000318"/>
    <property type="project" value="GO_Central"/>
</dbReference>
<dbReference type="InterPro" id="IPR027786">
    <property type="entry name" value="Nse4/EID"/>
</dbReference>
<dbReference type="InterPro" id="IPR014854">
    <property type="entry name" value="Nse4_C"/>
</dbReference>
<dbReference type="InterPro" id="IPR029225">
    <property type="entry name" value="Nse4_Nse3-bd"/>
</dbReference>
<dbReference type="PANTHER" id="PTHR16140:SF1">
    <property type="entry name" value="EP300-INTERACTING INHIBITOR OF DIFFERENTIATION 3"/>
    <property type="match status" value="1"/>
</dbReference>
<dbReference type="PANTHER" id="PTHR16140">
    <property type="entry name" value="NON-STRUCTURAL MAINTENANCE OF CHROMOSOMES ELEMENT 4"/>
    <property type="match status" value="1"/>
</dbReference>
<dbReference type="Pfam" id="PF15412">
    <property type="entry name" value="Nse4-Nse3_bdg"/>
    <property type="match status" value="1"/>
</dbReference>
<dbReference type="Pfam" id="PF08743">
    <property type="entry name" value="Nse4_C"/>
    <property type="match status" value="1"/>
</dbReference>
<proteinExistence type="evidence at transcript level"/>
<reference evidence="4" key="1">
    <citation type="submission" date="2007-07" db="EMBL/GenBank/DDBJ databases">
        <authorList>
            <consortium name="NIH - Mammalian Gene Collection (MGC) project"/>
        </authorList>
    </citation>
    <scope>NUCLEOTIDE SEQUENCE [LARGE SCALE MRNA]</scope>
    <source>
        <strain evidence="4">Hereford</strain>
        <tissue evidence="4">Fetal pons</tissue>
    </source>
</reference>
<comment type="function">
    <text evidence="1">Tissue-specific component of the SMC5-SMC6 complex, a complex involved in repair of DNA double-strand breaks by homologous recombination. The complex may promote sister chromatid homologous recombination by recruiting the SMC1-SMC3 cohesin complex to double-strand breaks. The complex is required for telomere maintenance via recombination and mediates sumoylation of shelterin complex (telosome) components (By similarity).</text>
</comment>
<comment type="function">
    <text evidence="1">Acts as a repressor of nuclear receptor-dependent transcription possibly by interfering with CREBBP-dependent coactivation. May function as a coinhibitor of other CREBBP/EP300-dependent transcription factors (By similarity).</text>
</comment>
<comment type="subunit">
    <text evidence="1">Component of the SMC5-SMC6 complex which consists at least of SMC5, SMC6, NSMCE2, NSMCE1, NSMCE4A or EID3 and NSMCE3. NSMCE1, NSMCE4A or EID3 and NSMCE3 probably form a subcomplex that bridges the head domains of the SMC5:SMC6 heterodimer (By similarity). Homodimer, and heterodimer with EID2. Interacts with the C-terminal region of CREBBP (By similarity).</text>
</comment>
<comment type="subcellular location">
    <subcellularLocation>
        <location evidence="2">Nucleus</location>
    </subcellularLocation>
    <subcellularLocation>
        <location evidence="2">Cytoplasm</location>
    </subcellularLocation>
    <subcellularLocation>
        <location evidence="1">Chromosome</location>
        <location evidence="1">Telomere</location>
    </subcellularLocation>
    <text evidence="2">May shuttle between nucleus and cytoplasm.</text>
</comment>
<comment type="similarity">
    <text evidence="3">Belongs to the NSE4 family.</text>
</comment>
<feature type="chain" id="PRO_0000315904" description="EP300-interacting inhibitor of differentiation 3">
    <location>
        <begin position="1"/>
        <end position="379"/>
    </location>
</feature>
<feature type="coiled-coil region" evidence="3">
    <location>
        <begin position="32"/>
        <end position="58"/>
    </location>
</feature>
<keyword id="KW-0158">Chromosome</keyword>
<keyword id="KW-0175">Coiled coil</keyword>
<keyword id="KW-0963">Cytoplasm</keyword>
<keyword id="KW-0227">DNA damage</keyword>
<keyword id="KW-0233">DNA recombination</keyword>
<keyword id="KW-0234">DNA repair</keyword>
<keyword id="KW-0539">Nucleus</keyword>
<keyword id="KW-1185">Reference proteome</keyword>
<keyword id="KW-0678">Repressor</keyword>
<keyword id="KW-0779">Telomere</keyword>
<keyword id="KW-0804">Transcription</keyword>
<keyword id="KW-0805">Transcription regulation</keyword>
<gene>
    <name evidence="2" type="primary">EID3</name>
</gene>